<comment type="function">
    <text evidence="3">Transcription factor that specifically regulates the expression of the gene cluster that mediates the biosynthesis of gramillins A and B, bicyclic lipopeptides that induce cell death in maize leaves but not in wheat leaves.</text>
</comment>
<comment type="subcellular location">
    <subcellularLocation>
        <location evidence="1">Nucleus</location>
    </subcellularLocation>
</comment>
<comment type="disruption phenotype">
    <text evidence="3">Abolishes the production of gramillins A and B.</text>
</comment>
<evidence type="ECO:0000255" key="1">
    <source>
        <dbReference type="PROSITE-ProRule" id="PRU00981"/>
    </source>
</evidence>
<evidence type="ECO:0000256" key="2">
    <source>
        <dbReference type="SAM" id="MobiDB-lite"/>
    </source>
</evidence>
<evidence type="ECO:0000269" key="3">
    <source>
    </source>
</evidence>
<evidence type="ECO:0000303" key="4">
    <source>
    </source>
</evidence>
<sequence>MPKPQSKRSSLPNYIKSRGELIASLQALLANDHVDLEILRSGVPWPSATEIVQLSQVSESNEDAPVAACHSSNEPVVVDPALGDDSHQAHIDLDVNWLSNLIPYNGDELSEQPDSSLFCSPPERMSVSDSSNNTDYLSHFSSSSICQWDNLLDSIGSQTFQDTINVLSPHCQDSGVSQPSNLADDTLGQGQPVSTVVQPQHPGSTERDESVSSIASSQESPRKRQRPHYAIEKRYRAGLQERFEALRDCVASLKKTQHEQRLPGTNEDLAEGDDGGSVSDRATVGRMNKAEVLNQATLCIRQLQEENEVVMEYIKLLIKQFRVMKQAMQQALKVDINS</sequence>
<keyword id="KW-0238">DNA-binding</keyword>
<keyword id="KW-0539">Nucleus</keyword>
<keyword id="KW-1185">Reference proteome</keyword>
<keyword id="KW-0804">Transcription</keyword>
<keyword id="KW-0805">Transcription regulation</keyword>
<name>GRA2_GIBZE</name>
<feature type="chain" id="PRO_0000450564" description="Transcription factor GRA2">
    <location>
        <begin position="1"/>
        <end position="338"/>
    </location>
</feature>
<feature type="domain" description="bHLH" evidence="1">
    <location>
        <begin position="223"/>
        <end position="303"/>
    </location>
</feature>
<feature type="region of interest" description="Disordered" evidence="2">
    <location>
        <begin position="171"/>
        <end position="230"/>
    </location>
</feature>
<feature type="region of interest" description="Basic motif" evidence="1">
    <location>
        <begin position="223"/>
        <end position="236"/>
    </location>
</feature>
<feature type="region of interest" description="Helix-loop-helix motif" evidence="1">
    <location>
        <begin position="237"/>
        <end position="303"/>
    </location>
</feature>
<feature type="region of interest" description="Disordered" evidence="2">
    <location>
        <begin position="256"/>
        <end position="277"/>
    </location>
</feature>
<feature type="compositionally biased region" description="Polar residues" evidence="2">
    <location>
        <begin position="174"/>
        <end position="203"/>
    </location>
</feature>
<protein>
    <recommendedName>
        <fullName evidence="4">Transcription factor GRA2</fullName>
    </recommendedName>
    <alternativeName>
        <fullName evidence="4">Gramillins biosynthetic cluster protein 2</fullName>
    </alternativeName>
</protein>
<organism>
    <name type="scientific">Gibberella zeae (strain ATCC MYA-4620 / CBS 123657 / FGSC 9075 / NRRL 31084 / PH-1)</name>
    <name type="common">Wheat head blight fungus</name>
    <name type="synonym">Fusarium graminearum</name>
    <dbReference type="NCBI Taxonomy" id="229533"/>
    <lineage>
        <taxon>Eukaryota</taxon>
        <taxon>Fungi</taxon>
        <taxon>Dikarya</taxon>
        <taxon>Ascomycota</taxon>
        <taxon>Pezizomycotina</taxon>
        <taxon>Sordariomycetes</taxon>
        <taxon>Hypocreomycetidae</taxon>
        <taxon>Hypocreales</taxon>
        <taxon>Nectriaceae</taxon>
        <taxon>Fusarium</taxon>
    </lineage>
</organism>
<gene>
    <name type="primary">GRA2</name>
    <name type="ORF">FGRAMPH1_01T00141</name>
    <name type="ORF">FGSG_11658</name>
</gene>
<accession>I1S491</accession>
<proteinExistence type="inferred from homology"/>
<dbReference type="EMBL" id="HG970332">
    <property type="protein sequence ID" value="CEF71870.1"/>
    <property type="molecule type" value="Genomic_DNA"/>
</dbReference>
<dbReference type="RefSeq" id="XP_011315629.1">
    <property type="nucleotide sequence ID" value="XM_011317327.1"/>
</dbReference>
<dbReference type="SMR" id="I1S491"/>
<dbReference type="STRING" id="229533.I1S491"/>
<dbReference type="GeneID" id="23558477"/>
<dbReference type="KEGG" id="fgr:FGSG_11658"/>
<dbReference type="VEuPathDB" id="FungiDB:FGRAMPH1_01G00141"/>
<dbReference type="eggNOG" id="ENOG502SRC5">
    <property type="taxonomic scope" value="Eukaryota"/>
</dbReference>
<dbReference type="HOGENOM" id="CLU_078304_0_0_1"/>
<dbReference type="InParanoid" id="I1S491"/>
<dbReference type="OrthoDB" id="82940at110618"/>
<dbReference type="PHI-base" id="PHI:1315"/>
<dbReference type="Proteomes" id="UP000070720">
    <property type="component" value="Chromosome 1"/>
</dbReference>
<dbReference type="GO" id="GO:0005634">
    <property type="term" value="C:nucleus"/>
    <property type="evidence" value="ECO:0007669"/>
    <property type="project" value="UniProtKB-SubCell"/>
</dbReference>
<dbReference type="GO" id="GO:0003677">
    <property type="term" value="F:DNA binding"/>
    <property type="evidence" value="ECO:0007669"/>
    <property type="project" value="UniProtKB-KW"/>
</dbReference>
<dbReference type="GO" id="GO:0046983">
    <property type="term" value="F:protein dimerization activity"/>
    <property type="evidence" value="ECO:0007669"/>
    <property type="project" value="InterPro"/>
</dbReference>
<dbReference type="CDD" id="cd11395">
    <property type="entry name" value="bHLHzip_SREBP_like"/>
    <property type="match status" value="1"/>
</dbReference>
<dbReference type="Gene3D" id="4.10.280.10">
    <property type="entry name" value="Helix-loop-helix DNA-binding domain"/>
    <property type="match status" value="1"/>
</dbReference>
<dbReference type="InterPro" id="IPR011598">
    <property type="entry name" value="bHLH_dom"/>
</dbReference>
<dbReference type="InterPro" id="IPR036638">
    <property type="entry name" value="HLH_DNA-bd_sf"/>
</dbReference>
<dbReference type="InterPro" id="IPR052099">
    <property type="entry name" value="Regulatory_TF_Diverse"/>
</dbReference>
<dbReference type="PANTHER" id="PTHR47336:SF4">
    <property type="entry name" value="BHLH TRANSCRIPTION FACTOR (EUROFUNG)"/>
    <property type="match status" value="1"/>
</dbReference>
<dbReference type="PANTHER" id="PTHR47336">
    <property type="entry name" value="TRANSCRIPTION FACTOR HMS1-RELATED"/>
    <property type="match status" value="1"/>
</dbReference>
<dbReference type="Pfam" id="PF00010">
    <property type="entry name" value="HLH"/>
    <property type="match status" value="1"/>
</dbReference>
<dbReference type="SMART" id="SM00353">
    <property type="entry name" value="HLH"/>
    <property type="match status" value="1"/>
</dbReference>
<dbReference type="SUPFAM" id="SSF47459">
    <property type="entry name" value="HLH, helix-loop-helix DNA-binding domain"/>
    <property type="match status" value="1"/>
</dbReference>
<dbReference type="PROSITE" id="PS50888">
    <property type="entry name" value="BHLH"/>
    <property type="match status" value="1"/>
</dbReference>
<reference key="1">
    <citation type="journal article" date="2007" name="Science">
        <title>The Fusarium graminearum genome reveals a link between localized polymorphism and pathogen specialization.</title>
        <authorList>
            <person name="Cuomo C.A."/>
            <person name="Gueldener U."/>
            <person name="Xu J.-R."/>
            <person name="Trail F."/>
            <person name="Turgeon B.G."/>
            <person name="Di Pietro A."/>
            <person name="Walton J.D."/>
            <person name="Ma L.-J."/>
            <person name="Baker S.E."/>
            <person name="Rep M."/>
            <person name="Adam G."/>
            <person name="Antoniw J."/>
            <person name="Baldwin T."/>
            <person name="Calvo S.E."/>
            <person name="Chang Y.-L."/>
            <person name="DeCaprio D."/>
            <person name="Gale L.R."/>
            <person name="Gnerre S."/>
            <person name="Goswami R.S."/>
            <person name="Hammond-Kosack K."/>
            <person name="Harris L.J."/>
            <person name="Hilburn K."/>
            <person name="Kennell J.C."/>
            <person name="Kroken S."/>
            <person name="Magnuson J.K."/>
            <person name="Mannhaupt G."/>
            <person name="Mauceli E.W."/>
            <person name="Mewes H.-W."/>
            <person name="Mitterbauer R."/>
            <person name="Muehlbauer G."/>
            <person name="Muensterkoetter M."/>
            <person name="Nelson D."/>
            <person name="O'Donnell K."/>
            <person name="Ouellet T."/>
            <person name="Qi W."/>
            <person name="Quesneville H."/>
            <person name="Roncero M.I.G."/>
            <person name="Seong K.-Y."/>
            <person name="Tetko I.V."/>
            <person name="Urban M."/>
            <person name="Waalwijk C."/>
            <person name="Ward T.J."/>
            <person name="Yao J."/>
            <person name="Birren B.W."/>
            <person name="Kistler H.C."/>
        </authorList>
    </citation>
    <scope>NUCLEOTIDE SEQUENCE [LARGE SCALE GENOMIC DNA]</scope>
    <source>
        <strain>ATCC MYA-4620 / CBS 123657 / FGSC 9075 / NRRL 31084 / PH-1</strain>
    </source>
</reference>
<reference key="2">
    <citation type="journal article" date="2010" name="Nature">
        <title>Comparative genomics reveals mobile pathogenicity chromosomes in Fusarium.</title>
        <authorList>
            <person name="Ma L.-J."/>
            <person name="van der Does H.C."/>
            <person name="Borkovich K.A."/>
            <person name="Coleman J.J."/>
            <person name="Daboussi M.-J."/>
            <person name="Di Pietro A."/>
            <person name="Dufresne M."/>
            <person name="Freitag M."/>
            <person name="Grabherr M."/>
            <person name="Henrissat B."/>
            <person name="Houterman P.M."/>
            <person name="Kang S."/>
            <person name="Shim W.-B."/>
            <person name="Woloshuk C."/>
            <person name="Xie X."/>
            <person name="Xu J.-R."/>
            <person name="Antoniw J."/>
            <person name="Baker S.E."/>
            <person name="Bluhm B.H."/>
            <person name="Breakspear A."/>
            <person name="Brown D.W."/>
            <person name="Butchko R.A.E."/>
            <person name="Chapman S."/>
            <person name="Coulson R."/>
            <person name="Coutinho P.M."/>
            <person name="Danchin E.G.J."/>
            <person name="Diener A."/>
            <person name="Gale L.R."/>
            <person name="Gardiner D.M."/>
            <person name="Goff S."/>
            <person name="Hammond-Kosack K.E."/>
            <person name="Hilburn K."/>
            <person name="Hua-Van A."/>
            <person name="Jonkers W."/>
            <person name="Kazan K."/>
            <person name="Kodira C.D."/>
            <person name="Koehrsen M."/>
            <person name="Kumar L."/>
            <person name="Lee Y.-H."/>
            <person name="Li L."/>
            <person name="Manners J.M."/>
            <person name="Miranda-Saavedra D."/>
            <person name="Mukherjee M."/>
            <person name="Park G."/>
            <person name="Park J."/>
            <person name="Park S.-Y."/>
            <person name="Proctor R.H."/>
            <person name="Regev A."/>
            <person name="Ruiz-Roldan M.C."/>
            <person name="Sain D."/>
            <person name="Sakthikumar S."/>
            <person name="Sykes S."/>
            <person name="Schwartz D.C."/>
            <person name="Turgeon B.G."/>
            <person name="Wapinski I."/>
            <person name="Yoder O."/>
            <person name="Young S."/>
            <person name="Zeng Q."/>
            <person name="Zhou S."/>
            <person name="Galagan J."/>
            <person name="Cuomo C.A."/>
            <person name="Kistler H.C."/>
            <person name="Rep M."/>
        </authorList>
    </citation>
    <scope>GENOME REANNOTATION</scope>
    <source>
        <strain>ATCC MYA-4620 / CBS 123657 / FGSC 9075 / NRRL 31084 / PH-1</strain>
    </source>
</reference>
<reference key="3">
    <citation type="journal article" date="2015" name="BMC Genomics">
        <title>The completed genome sequence of the pathogenic ascomycete fungus Fusarium graminearum.</title>
        <authorList>
            <person name="King R."/>
            <person name="Urban M."/>
            <person name="Hammond-Kosack M.C.U."/>
            <person name="Hassani-Pak K."/>
            <person name="Hammond-Kosack K.E."/>
        </authorList>
    </citation>
    <scope>NUCLEOTIDE SEQUENCE [LARGE SCALE GENOMIC DNA]</scope>
    <source>
        <strain>ATCC MYA-4620 / CBS 123657 / FGSC 9075 / NRRL 31084 / PH-1</strain>
    </source>
</reference>
<reference key="4">
    <citation type="journal article" date="2018" name="J. Am. Chem. Soc.">
        <title>Gramillin A and B: cyclic lipopeptides identified as the nonribosomal biosynthetic products of Fusarium graminearum.</title>
        <authorList>
            <person name="Bahadoor A."/>
            <person name="Brauer E.K."/>
            <person name="Bosnich W."/>
            <person name="Schneiderman D."/>
            <person name="Johnston A."/>
            <person name="Aubin Y."/>
            <person name="Blackwell B."/>
            <person name="Melanson J.E."/>
            <person name="Harris L.J."/>
        </authorList>
    </citation>
    <scope>FUNCTION</scope>
    <scope>DISRUPTION PHENOTYPE</scope>
</reference>